<dbReference type="EC" id="1.14.-.-"/>
<dbReference type="EMBL" id="AE014134">
    <property type="protein sequence ID" value="AAF52226.1"/>
    <property type="molecule type" value="Genomic_DNA"/>
</dbReference>
<dbReference type="EMBL" id="AY069176">
    <property type="protein sequence ID" value="AAL39321.1"/>
    <property type="molecule type" value="mRNA"/>
</dbReference>
<dbReference type="RefSeq" id="NP_608912.1">
    <property type="nucleotide sequence ID" value="NM_135068.4"/>
</dbReference>
<dbReference type="SMR" id="Q9VMT5"/>
<dbReference type="BioGRID" id="59920">
    <property type="interactions" value="4"/>
</dbReference>
<dbReference type="DIP" id="DIP-18896N"/>
<dbReference type="IntAct" id="Q9VMT5">
    <property type="interactions" value="5"/>
</dbReference>
<dbReference type="STRING" id="7227.FBpp0078698"/>
<dbReference type="PaxDb" id="7227-FBpp0078698"/>
<dbReference type="DNASU" id="33749"/>
<dbReference type="EnsemblMetazoa" id="FBtr0079062">
    <property type="protein sequence ID" value="FBpp0078698"/>
    <property type="gene ID" value="FBgn0031689"/>
</dbReference>
<dbReference type="GeneID" id="33749"/>
<dbReference type="KEGG" id="dme:Dmel_CG10833"/>
<dbReference type="UCSC" id="CG10833-RA">
    <property type="organism name" value="d. melanogaster"/>
</dbReference>
<dbReference type="AGR" id="FB:FBgn0031689"/>
<dbReference type="CTD" id="33749"/>
<dbReference type="FlyBase" id="FBgn0031689">
    <property type="gene designation" value="Cyp28d1"/>
</dbReference>
<dbReference type="VEuPathDB" id="VectorBase:FBgn0031689"/>
<dbReference type="eggNOG" id="KOG0158">
    <property type="taxonomic scope" value="Eukaryota"/>
</dbReference>
<dbReference type="GeneTree" id="ENSGT00940000167276"/>
<dbReference type="HOGENOM" id="CLU_001570_5_2_1"/>
<dbReference type="InParanoid" id="Q9VMT5"/>
<dbReference type="OMA" id="EMAKFTD"/>
<dbReference type="OrthoDB" id="2789670at2759"/>
<dbReference type="PhylomeDB" id="Q9VMT5"/>
<dbReference type="BioGRID-ORCS" id="33749">
    <property type="hits" value="0 hits in 1 CRISPR screen"/>
</dbReference>
<dbReference type="GenomeRNAi" id="33749"/>
<dbReference type="PRO" id="PR:Q9VMT5"/>
<dbReference type="Proteomes" id="UP000000803">
    <property type="component" value="Chromosome 2L"/>
</dbReference>
<dbReference type="Bgee" id="FBgn0031689">
    <property type="expression patterns" value="Expressed in ensheathing neuropil associated glial cell (Drosophila) in brain and 92 other cell types or tissues"/>
</dbReference>
<dbReference type="GO" id="GO:0005789">
    <property type="term" value="C:endoplasmic reticulum membrane"/>
    <property type="evidence" value="ECO:0007669"/>
    <property type="project" value="UniProtKB-SubCell"/>
</dbReference>
<dbReference type="GO" id="GO:0020037">
    <property type="term" value="F:heme binding"/>
    <property type="evidence" value="ECO:0007669"/>
    <property type="project" value="InterPro"/>
</dbReference>
<dbReference type="GO" id="GO:0005506">
    <property type="term" value="F:iron ion binding"/>
    <property type="evidence" value="ECO:0007669"/>
    <property type="project" value="InterPro"/>
</dbReference>
<dbReference type="GO" id="GO:0004497">
    <property type="term" value="F:monooxygenase activity"/>
    <property type="evidence" value="ECO:0007669"/>
    <property type="project" value="UniProtKB-KW"/>
</dbReference>
<dbReference type="GO" id="GO:0016705">
    <property type="term" value="F:oxidoreductase activity, acting on paired donors, with incorporation or reduction of molecular oxygen"/>
    <property type="evidence" value="ECO:0007669"/>
    <property type="project" value="InterPro"/>
</dbReference>
<dbReference type="CDD" id="cd11056">
    <property type="entry name" value="CYP6-like"/>
    <property type="match status" value="1"/>
</dbReference>
<dbReference type="FunFam" id="1.10.630.10:FF:000182">
    <property type="entry name" value="Cytochrome P450 3A4"/>
    <property type="match status" value="1"/>
</dbReference>
<dbReference type="Gene3D" id="1.10.630.10">
    <property type="entry name" value="Cytochrome P450"/>
    <property type="match status" value="1"/>
</dbReference>
<dbReference type="InterPro" id="IPR001128">
    <property type="entry name" value="Cyt_P450"/>
</dbReference>
<dbReference type="InterPro" id="IPR017972">
    <property type="entry name" value="Cyt_P450_CS"/>
</dbReference>
<dbReference type="InterPro" id="IPR002401">
    <property type="entry name" value="Cyt_P450_E_grp-I"/>
</dbReference>
<dbReference type="InterPro" id="IPR036396">
    <property type="entry name" value="Cyt_P450_sf"/>
</dbReference>
<dbReference type="InterPro" id="IPR050476">
    <property type="entry name" value="Insect_CytP450_Detox"/>
</dbReference>
<dbReference type="PANTHER" id="PTHR24292">
    <property type="entry name" value="CYTOCHROME P450"/>
    <property type="match status" value="1"/>
</dbReference>
<dbReference type="PANTHER" id="PTHR24292:SF84">
    <property type="entry name" value="CYTOCHROME P450 28A5-RELATED"/>
    <property type="match status" value="1"/>
</dbReference>
<dbReference type="Pfam" id="PF00067">
    <property type="entry name" value="p450"/>
    <property type="match status" value="1"/>
</dbReference>
<dbReference type="PRINTS" id="PR00463">
    <property type="entry name" value="EP450I"/>
</dbReference>
<dbReference type="PRINTS" id="PR00385">
    <property type="entry name" value="P450"/>
</dbReference>
<dbReference type="SUPFAM" id="SSF48264">
    <property type="entry name" value="Cytochrome P450"/>
    <property type="match status" value="1"/>
</dbReference>
<dbReference type="PROSITE" id="PS00086">
    <property type="entry name" value="CYTOCHROME_P450"/>
    <property type="match status" value="1"/>
</dbReference>
<feature type="chain" id="PRO_0000051990" description="Probable cytochrome P450 28d1">
    <location>
        <begin position="1"/>
        <end position="502"/>
    </location>
</feature>
<feature type="binding site" description="axial binding residue" evidence="1">
    <location>
        <position position="446"/>
    </location>
    <ligand>
        <name>heme</name>
        <dbReference type="ChEBI" id="CHEBI:30413"/>
    </ligand>
    <ligandPart>
        <name>Fe</name>
        <dbReference type="ChEBI" id="CHEBI:18248"/>
    </ligandPart>
</feature>
<sequence>MCPISTALFVIAAILALIYVFLTWNFSYWKKRGIPTAKSWPFVGSFPSVFTQKRNVVYDIDEIYEQYKNTDSIVGVFQTRIPQLMVTTPEYAHKIYVSDFRSFHDNEMAKFTDSKTDPILANNPFVLTGEAWKERRAEVTPGLSANRVKAAYPVSLRVCKKFVEYIRRQSLMAPAQGLNAKDLCLCYTTEVISDCVLGISAQSFTDNPTPMVGMTKRVFEQSFGFIFYTVVANLWPPITKFYSVSLFAKDVAAFFYDLMQKCIQVRRESPAAQQRDDFLNYMLQLQEKKGLNAAELTSHTMTFLTDGFETTAQVLTHTLLFLARNPKEQMKLREEIGTAELTFEQISELPFTEACIHETLRIFSPVLAARKVVTEPCELTNKNGVSVKLRPGDVVIIPVNALHHDPQYYEEPQSFKPERFLNINGGAKKYRDQGLFFGFGDGPRICPGMRFSLTQIKAALVEIVRNFDIKVNPKTRKDNEIDDTYFMPALKGGVWLDFVERN</sequence>
<keyword id="KW-0256">Endoplasmic reticulum</keyword>
<keyword id="KW-0349">Heme</keyword>
<keyword id="KW-0408">Iron</keyword>
<keyword id="KW-0472">Membrane</keyword>
<keyword id="KW-0479">Metal-binding</keyword>
<keyword id="KW-0492">Microsome</keyword>
<keyword id="KW-0503">Monooxygenase</keyword>
<keyword id="KW-0560">Oxidoreductase</keyword>
<keyword id="KW-1185">Reference proteome</keyword>
<comment type="function">
    <text evidence="1">May be involved in the metabolism of insect hormones and in the breakdown of synthetic insecticides.</text>
</comment>
<comment type="cofactor">
    <cofactor evidence="1">
        <name>heme</name>
        <dbReference type="ChEBI" id="CHEBI:30413"/>
    </cofactor>
</comment>
<comment type="subcellular location">
    <subcellularLocation>
        <location evidence="2">Endoplasmic reticulum membrane</location>
        <topology evidence="2">Peripheral membrane protein</topology>
    </subcellularLocation>
    <subcellularLocation>
        <location evidence="2">Microsome membrane</location>
        <topology evidence="2">Peripheral membrane protein</topology>
    </subcellularLocation>
</comment>
<comment type="similarity">
    <text evidence="2">Belongs to the cytochrome P450 family.</text>
</comment>
<organism>
    <name type="scientific">Drosophila melanogaster</name>
    <name type="common">Fruit fly</name>
    <dbReference type="NCBI Taxonomy" id="7227"/>
    <lineage>
        <taxon>Eukaryota</taxon>
        <taxon>Metazoa</taxon>
        <taxon>Ecdysozoa</taxon>
        <taxon>Arthropoda</taxon>
        <taxon>Hexapoda</taxon>
        <taxon>Insecta</taxon>
        <taxon>Pterygota</taxon>
        <taxon>Neoptera</taxon>
        <taxon>Endopterygota</taxon>
        <taxon>Diptera</taxon>
        <taxon>Brachycera</taxon>
        <taxon>Muscomorpha</taxon>
        <taxon>Ephydroidea</taxon>
        <taxon>Drosophilidae</taxon>
        <taxon>Drosophila</taxon>
        <taxon>Sophophora</taxon>
    </lineage>
</organism>
<protein>
    <recommendedName>
        <fullName>Probable cytochrome P450 28d1</fullName>
        <ecNumber>1.14.-.-</ecNumber>
    </recommendedName>
    <alternativeName>
        <fullName>CYPXXVIIID1</fullName>
    </alternativeName>
</protein>
<evidence type="ECO:0000250" key="1"/>
<evidence type="ECO:0000305" key="2"/>
<gene>
    <name type="primary">Cyp28d1</name>
    <name type="ORF">CG10833</name>
</gene>
<reference key="1">
    <citation type="journal article" date="2000" name="Science">
        <title>The genome sequence of Drosophila melanogaster.</title>
        <authorList>
            <person name="Adams M.D."/>
            <person name="Celniker S.E."/>
            <person name="Holt R.A."/>
            <person name="Evans C.A."/>
            <person name="Gocayne J.D."/>
            <person name="Amanatides P.G."/>
            <person name="Scherer S.E."/>
            <person name="Li P.W."/>
            <person name="Hoskins R.A."/>
            <person name="Galle R.F."/>
            <person name="George R.A."/>
            <person name="Lewis S.E."/>
            <person name="Richards S."/>
            <person name="Ashburner M."/>
            <person name="Henderson S.N."/>
            <person name="Sutton G.G."/>
            <person name="Wortman J.R."/>
            <person name="Yandell M.D."/>
            <person name="Zhang Q."/>
            <person name="Chen L.X."/>
            <person name="Brandon R.C."/>
            <person name="Rogers Y.-H.C."/>
            <person name="Blazej R.G."/>
            <person name="Champe M."/>
            <person name="Pfeiffer B.D."/>
            <person name="Wan K.H."/>
            <person name="Doyle C."/>
            <person name="Baxter E.G."/>
            <person name="Helt G."/>
            <person name="Nelson C.R."/>
            <person name="Miklos G.L.G."/>
            <person name="Abril J.F."/>
            <person name="Agbayani A."/>
            <person name="An H.-J."/>
            <person name="Andrews-Pfannkoch C."/>
            <person name="Baldwin D."/>
            <person name="Ballew R.M."/>
            <person name="Basu A."/>
            <person name="Baxendale J."/>
            <person name="Bayraktaroglu L."/>
            <person name="Beasley E.M."/>
            <person name="Beeson K.Y."/>
            <person name="Benos P.V."/>
            <person name="Berman B.P."/>
            <person name="Bhandari D."/>
            <person name="Bolshakov S."/>
            <person name="Borkova D."/>
            <person name="Botchan M.R."/>
            <person name="Bouck J."/>
            <person name="Brokstein P."/>
            <person name="Brottier P."/>
            <person name="Burtis K.C."/>
            <person name="Busam D.A."/>
            <person name="Butler H."/>
            <person name="Cadieu E."/>
            <person name="Center A."/>
            <person name="Chandra I."/>
            <person name="Cherry J.M."/>
            <person name="Cawley S."/>
            <person name="Dahlke C."/>
            <person name="Davenport L.B."/>
            <person name="Davies P."/>
            <person name="de Pablos B."/>
            <person name="Delcher A."/>
            <person name="Deng Z."/>
            <person name="Mays A.D."/>
            <person name="Dew I."/>
            <person name="Dietz S.M."/>
            <person name="Dodson K."/>
            <person name="Doup L.E."/>
            <person name="Downes M."/>
            <person name="Dugan-Rocha S."/>
            <person name="Dunkov B.C."/>
            <person name="Dunn P."/>
            <person name="Durbin K.J."/>
            <person name="Evangelista C.C."/>
            <person name="Ferraz C."/>
            <person name="Ferriera S."/>
            <person name="Fleischmann W."/>
            <person name="Fosler C."/>
            <person name="Gabrielian A.E."/>
            <person name="Garg N.S."/>
            <person name="Gelbart W.M."/>
            <person name="Glasser K."/>
            <person name="Glodek A."/>
            <person name="Gong F."/>
            <person name="Gorrell J.H."/>
            <person name="Gu Z."/>
            <person name="Guan P."/>
            <person name="Harris M."/>
            <person name="Harris N.L."/>
            <person name="Harvey D.A."/>
            <person name="Heiman T.J."/>
            <person name="Hernandez J.R."/>
            <person name="Houck J."/>
            <person name="Hostin D."/>
            <person name="Houston K.A."/>
            <person name="Howland T.J."/>
            <person name="Wei M.-H."/>
            <person name="Ibegwam C."/>
            <person name="Jalali M."/>
            <person name="Kalush F."/>
            <person name="Karpen G.H."/>
            <person name="Ke Z."/>
            <person name="Kennison J.A."/>
            <person name="Ketchum K.A."/>
            <person name="Kimmel B.E."/>
            <person name="Kodira C.D."/>
            <person name="Kraft C.L."/>
            <person name="Kravitz S."/>
            <person name="Kulp D."/>
            <person name="Lai Z."/>
            <person name="Lasko P."/>
            <person name="Lei Y."/>
            <person name="Levitsky A.A."/>
            <person name="Li J.H."/>
            <person name="Li Z."/>
            <person name="Liang Y."/>
            <person name="Lin X."/>
            <person name="Liu X."/>
            <person name="Mattei B."/>
            <person name="McIntosh T.C."/>
            <person name="McLeod M.P."/>
            <person name="McPherson D."/>
            <person name="Merkulov G."/>
            <person name="Milshina N.V."/>
            <person name="Mobarry C."/>
            <person name="Morris J."/>
            <person name="Moshrefi A."/>
            <person name="Mount S.M."/>
            <person name="Moy M."/>
            <person name="Murphy B."/>
            <person name="Murphy L."/>
            <person name="Muzny D.M."/>
            <person name="Nelson D.L."/>
            <person name="Nelson D.R."/>
            <person name="Nelson K.A."/>
            <person name="Nixon K."/>
            <person name="Nusskern D.R."/>
            <person name="Pacleb J.M."/>
            <person name="Palazzolo M."/>
            <person name="Pittman G.S."/>
            <person name="Pan S."/>
            <person name="Pollard J."/>
            <person name="Puri V."/>
            <person name="Reese M.G."/>
            <person name="Reinert K."/>
            <person name="Remington K."/>
            <person name="Saunders R.D.C."/>
            <person name="Scheeler F."/>
            <person name="Shen H."/>
            <person name="Shue B.C."/>
            <person name="Siden-Kiamos I."/>
            <person name="Simpson M."/>
            <person name="Skupski M.P."/>
            <person name="Smith T.J."/>
            <person name="Spier E."/>
            <person name="Spradling A.C."/>
            <person name="Stapleton M."/>
            <person name="Strong R."/>
            <person name="Sun E."/>
            <person name="Svirskas R."/>
            <person name="Tector C."/>
            <person name="Turner R."/>
            <person name="Venter E."/>
            <person name="Wang A.H."/>
            <person name="Wang X."/>
            <person name="Wang Z.-Y."/>
            <person name="Wassarman D.A."/>
            <person name="Weinstock G.M."/>
            <person name="Weissenbach J."/>
            <person name="Williams S.M."/>
            <person name="Woodage T."/>
            <person name="Worley K.C."/>
            <person name="Wu D."/>
            <person name="Yang S."/>
            <person name="Yao Q.A."/>
            <person name="Ye J."/>
            <person name="Yeh R.-F."/>
            <person name="Zaveri J.S."/>
            <person name="Zhan M."/>
            <person name="Zhang G."/>
            <person name="Zhao Q."/>
            <person name="Zheng L."/>
            <person name="Zheng X.H."/>
            <person name="Zhong F.N."/>
            <person name="Zhong W."/>
            <person name="Zhou X."/>
            <person name="Zhu S.C."/>
            <person name="Zhu X."/>
            <person name="Smith H.O."/>
            <person name="Gibbs R.A."/>
            <person name="Myers E.W."/>
            <person name="Rubin G.M."/>
            <person name="Venter J.C."/>
        </authorList>
    </citation>
    <scope>NUCLEOTIDE SEQUENCE [LARGE SCALE GENOMIC DNA]</scope>
    <source>
        <strain>Berkeley</strain>
    </source>
</reference>
<reference key="2">
    <citation type="journal article" date="2002" name="Genome Biol.">
        <title>Annotation of the Drosophila melanogaster euchromatic genome: a systematic review.</title>
        <authorList>
            <person name="Misra S."/>
            <person name="Crosby M.A."/>
            <person name="Mungall C.J."/>
            <person name="Matthews B.B."/>
            <person name="Campbell K.S."/>
            <person name="Hradecky P."/>
            <person name="Huang Y."/>
            <person name="Kaminker J.S."/>
            <person name="Millburn G.H."/>
            <person name="Prochnik S.E."/>
            <person name="Smith C.D."/>
            <person name="Tupy J.L."/>
            <person name="Whitfield E.J."/>
            <person name="Bayraktaroglu L."/>
            <person name="Berman B.P."/>
            <person name="Bettencourt B.R."/>
            <person name="Celniker S.E."/>
            <person name="de Grey A.D.N.J."/>
            <person name="Drysdale R.A."/>
            <person name="Harris N.L."/>
            <person name="Richter J."/>
            <person name="Russo S."/>
            <person name="Schroeder A.J."/>
            <person name="Shu S.Q."/>
            <person name="Stapleton M."/>
            <person name="Yamada C."/>
            <person name="Ashburner M."/>
            <person name="Gelbart W.M."/>
            <person name="Rubin G.M."/>
            <person name="Lewis S.E."/>
        </authorList>
    </citation>
    <scope>GENOME REANNOTATION</scope>
    <source>
        <strain>Berkeley</strain>
    </source>
</reference>
<reference key="3">
    <citation type="journal article" date="2002" name="Genome Biol.">
        <title>A Drosophila full-length cDNA resource.</title>
        <authorList>
            <person name="Stapleton M."/>
            <person name="Carlson J.W."/>
            <person name="Brokstein P."/>
            <person name="Yu C."/>
            <person name="Champe M."/>
            <person name="George R.A."/>
            <person name="Guarin H."/>
            <person name="Kronmiller B."/>
            <person name="Pacleb J.M."/>
            <person name="Park S."/>
            <person name="Wan K.H."/>
            <person name="Rubin G.M."/>
            <person name="Celniker S.E."/>
        </authorList>
    </citation>
    <scope>NUCLEOTIDE SEQUENCE [LARGE SCALE MRNA]</scope>
    <source>
        <strain>Berkeley</strain>
        <tissue>Head</tissue>
    </source>
</reference>
<name>C28D1_DROME</name>
<proteinExistence type="evidence at transcript level"/>
<accession>Q9VMT5</accession>